<protein>
    <recommendedName>
        <fullName evidence="2">Large ribosomal subunit protein uL2</fullName>
    </recommendedName>
    <alternativeName>
        <fullName>60S ribosomal protein L2</fullName>
    </alternativeName>
    <alternativeName>
        <fullName>60S ribosomal protein L8</fullName>
    </alternativeName>
</protein>
<proteinExistence type="evidence at protein level"/>
<comment type="similarity">
    <text evidence="2">Belongs to the universal ribosomal protein uL2 family.</text>
</comment>
<comment type="sequence caution" evidence="2">
    <conflict type="frameshift">
        <sequence resource="EMBL-CDS" id="CAA33741"/>
    </conflict>
</comment>
<reference key="1">
    <citation type="journal article" date="1989" name="Nucleic Acids Res.">
        <title>Nucleotide sequence of V1, a ribosomal protein gene from Dictyostelium discoideum.</title>
        <authorList>
            <person name="Singleton C.K."/>
        </authorList>
    </citation>
    <scope>NUCLEOTIDE SEQUENCE [MRNA]</scope>
    <source>
        <strain>AX3</strain>
    </source>
</reference>
<reference key="2">
    <citation type="journal article" date="2002" name="Nature">
        <title>Sequence and analysis of chromosome 2 of Dictyostelium discoideum.</title>
        <authorList>
            <person name="Gloeckner G."/>
            <person name="Eichinger L."/>
            <person name="Szafranski K."/>
            <person name="Pachebat J.A."/>
            <person name="Bankier A.T."/>
            <person name="Dear P.H."/>
            <person name="Lehmann R."/>
            <person name="Baumgart C."/>
            <person name="Parra G."/>
            <person name="Abril J.F."/>
            <person name="Guigo R."/>
            <person name="Kumpf K."/>
            <person name="Tunggal B."/>
            <person name="Cox E.C."/>
            <person name="Quail M.A."/>
            <person name="Platzer M."/>
            <person name="Rosenthal A."/>
            <person name="Noegel A.A."/>
        </authorList>
    </citation>
    <scope>NUCLEOTIDE SEQUENCE [LARGE SCALE GENOMIC DNA]</scope>
    <source>
        <strain>AX4</strain>
    </source>
</reference>
<reference key="3">
    <citation type="journal article" date="2005" name="Nature">
        <title>The genome of the social amoeba Dictyostelium discoideum.</title>
        <authorList>
            <person name="Eichinger L."/>
            <person name="Pachebat J.A."/>
            <person name="Gloeckner G."/>
            <person name="Rajandream M.A."/>
            <person name="Sucgang R."/>
            <person name="Berriman M."/>
            <person name="Song J."/>
            <person name="Olsen R."/>
            <person name="Szafranski K."/>
            <person name="Xu Q."/>
            <person name="Tunggal B."/>
            <person name="Kummerfeld S."/>
            <person name="Madera M."/>
            <person name="Konfortov B.A."/>
            <person name="Rivero F."/>
            <person name="Bankier A.T."/>
            <person name="Lehmann R."/>
            <person name="Hamlin N."/>
            <person name="Davies R."/>
            <person name="Gaudet P."/>
            <person name="Fey P."/>
            <person name="Pilcher K."/>
            <person name="Chen G."/>
            <person name="Saunders D."/>
            <person name="Sodergren E.J."/>
            <person name="Davis P."/>
            <person name="Kerhornou A."/>
            <person name="Nie X."/>
            <person name="Hall N."/>
            <person name="Anjard C."/>
            <person name="Hemphill L."/>
            <person name="Bason N."/>
            <person name="Farbrother P."/>
            <person name="Desany B."/>
            <person name="Just E."/>
            <person name="Morio T."/>
            <person name="Rost R."/>
            <person name="Churcher C.M."/>
            <person name="Cooper J."/>
            <person name="Haydock S."/>
            <person name="van Driessche N."/>
            <person name="Cronin A."/>
            <person name="Goodhead I."/>
            <person name="Muzny D.M."/>
            <person name="Mourier T."/>
            <person name="Pain A."/>
            <person name="Lu M."/>
            <person name="Harper D."/>
            <person name="Lindsay R."/>
            <person name="Hauser H."/>
            <person name="James K.D."/>
            <person name="Quiles M."/>
            <person name="Madan Babu M."/>
            <person name="Saito T."/>
            <person name="Buchrieser C."/>
            <person name="Wardroper A."/>
            <person name="Felder M."/>
            <person name="Thangavelu M."/>
            <person name="Johnson D."/>
            <person name="Knights A."/>
            <person name="Loulseged H."/>
            <person name="Mungall K.L."/>
            <person name="Oliver K."/>
            <person name="Price C."/>
            <person name="Quail M.A."/>
            <person name="Urushihara H."/>
            <person name="Hernandez J."/>
            <person name="Rabbinowitsch E."/>
            <person name="Steffen D."/>
            <person name="Sanders M."/>
            <person name="Ma J."/>
            <person name="Kohara Y."/>
            <person name="Sharp S."/>
            <person name="Simmonds M.N."/>
            <person name="Spiegler S."/>
            <person name="Tivey A."/>
            <person name="Sugano S."/>
            <person name="White B."/>
            <person name="Walker D."/>
            <person name="Woodward J.R."/>
            <person name="Winckler T."/>
            <person name="Tanaka Y."/>
            <person name="Shaulsky G."/>
            <person name="Schleicher M."/>
            <person name="Weinstock G.M."/>
            <person name="Rosenthal A."/>
            <person name="Cox E.C."/>
            <person name="Chisholm R.L."/>
            <person name="Gibbs R.A."/>
            <person name="Loomis W.F."/>
            <person name="Platzer M."/>
            <person name="Kay R.R."/>
            <person name="Williams J.G."/>
            <person name="Dear P.H."/>
            <person name="Noegel A.A."/>
            <person name="Barrell B.G."/>
            <person name="Kuspa A."/>
        </authorList>
    </citation>
    <scope>NUCLEOTIDE SEQUENCE [LARGE SCALE GENOMIC DNA]</scope>
    <source>
        <strain>AX4</strain>
    </source>
</reference>
<reference key="4">
    <citation type="submission" date="2009-07" db="UniProtKB">
        <authorList>
            <person name="Bienvenut W.V."/>
            <person name="Ura S."/>
            <person name="Insall R.H."/>
        </authorList>
    </citation>
    <scope>PROTEIN SEQUENCE OF 30-38; 44-61; 75-93; 108-120; 130-148; 165-182 AND 229-242</scope>
    <scope>IDENTIFICATION BY MASS SPECTROMETRY</scope>
    <source>
        <strain>AX2</strain>
    </source>
</reference>
<gene>
    <name type="primary">rpl8</name>
    <name type="synonym">rpgA</name>
    <name type="synonym">rpl2</name>
    <name type="synonym">V1</name>
    <name type="ORF">DDB_G0274113</name>
</gene>
<dbReference type="EMBL" id="X15710">
    <property type="protein sequence ID" value="CAA33741.1"/>
    <property type="status" value="ALT_FRAME"/>
    <property type="molecule type" value="mRNA"/>
</dbReference>
<dbReference type="EMBL" id="AAFI02000012">
    <property type="protein sequence ID" value="EAL69949.1"/>
    <property type="molecule type" value="Genomic_DNA"/>
</dbReference>
<dbReference type="PIR" id="S06087">
    <property type="entry name" value="R5DO2"/>
</dbReference>
<dbReference type="RefSeq" id="XP_644192.1">
    <property type="nucleotide sequence ID" value="XM_639100.1"/>
</dbReference>
<dbReference type="SMR" id="P13023"/>
<dbReference type="FunCoup" id="P13023">
    <property type="interactions" value="492"/>
</dbReference>
<dbReference type="STRING" id="44689.P13023"/>
<dbReference type="PaxDb" id="44689-DDB0185202"/>
<dbReference type="EnsemblProtists" id="EAL69949">
    <property type="protein sequence ID" value="EAL69949"/>
    <property type="gene ID" value="DDB_G0274113"/>
</dbReference>
<dbReference type="GeneID" id="8619621"/>
<dbReference type="KEGG" id="ddi:DDB_G0274113"/>
<dbReference type="dictyBase" id="DDB_G0274113">
    <property type="gene designation" value="rpl8"/>
</dbReference>
<dbReference type="VEuPathDB" id="AmoebaDB:DDB_G0274113"/>
<dbReference type="eggNOG" id="KOG2309">
    <property type="taxonomic scope" value="Eukaryota"/>
</dbReference>
<dbReference type="HOGENOM" id="CLU_036235_0_3_1"/>
<dbReference type="InParanoid" id="P13023"/>
<dbReference type="OMA" id="GGRHPCT"/>
<dbReference type="PhylomeDB" id="P13023"/>
<dbReference type="Reactome" id="R-DDI-156827">
    <property type="pathway name" value="L13a-mediated translational silencing of Ceruloplasmin expression"/>
</dbReference>
<dbReference type="Reactome" id="R-DDI-1799339">
    <property type="pathway name" value="SRP-dependent cotranslational protein targeting to membrane"/>
</dbReference>
<dbReference type="Reactome" id="R-DDI-72689">
    <property type="pathway name" value="Formation of a pool of free 40S subunits"/>
</dbReference>
<dbReference type="Reactome" id="R-DDI-72706">
    <property type="pathway name" value="GTP hydrolysis and joining of the 60S ribosomal subunit"/>
</dbReference>
<dbReference type="Reactome" id="R-DDI-9629569">
    <property type="pathway name" value="Protein hydroxylation"/>
</dbReference>
<dbReference type="Reactome" id="R-DDI-975956">
    <property type="pathway name" value="Nonsense Mediated Decay (NMD) independent of the Exon Junction Complex (EJC)"/>
</dbReference>
<dbReference type="Reactome" id="R-DDI-975957">
    <property type="pathway name" value="Nonsense Mediated Decay (NMD) enhanced by the Exon Junction Complex (EJC)"/>
</dbReference>
<dbReference type="PRO" id="PR:P13023"/>
<dbReference type="Proteomes" id="UP000002195">
    <property type="component" value="Chromosome 2"/>
</dbReference>
<dbReference type="GO" id="GO:0022625">
    <property type="term" value="C:cytosolic large ribosomal subunit"/>
    <property type="evidence" value="ECO:0000318"/>
    <property type="project" value="GO_Central"/>
</dbReference>
<dbReference type="GO" id="GO:0031012">
    <property type="term" value="C:extracellular matrix"/>
    <property type="evidence" value="ECO:0007005"/>
    <property type="project" value="dictyBase"/>
</dbReference>
<dbReference type="GO" id="GO:0003723">
    <property type="term" value="F:RNA binding"/>
    <property type="evidence" value="ECO:0000318"/>
    <property type="project" value="GO_Central"/>
</dbReference>
<dbReference type="GO" id="GO:0003735">
    <property type="term" value="F:structural constituent of ribosome"/>
    <property type="evidence" value="ECO:0000318"/>
    <property type="project" value="GO_Central"/>
</dbReference>
<dbReference type="GO" id="GO:0002181">
    <property type="term" value="P:cytoplasmic translation"/>
    <property type="evidence" value="ECO:0000318"/>
    <property type="project" value="GO_Central"/>
</dbReference>
<dbReference type="FunFam" id="2.40.50.140:FF:000020">
    <property type="entry name" value="60S ribosomal protein L2"/>
    <property type="match status" value="1"/>
</dbReference>
<dbReference type="FunFam" id="4.10.950.10:FF:000002">
    <property type="entry name" value="60S ribosomal protein L2"/>
    <property type="match status" value="1"/>
</dbReference>
<dbReference type="FunFam" id="2.30.30.30:FF:000006">
    <property type="entry name" value="60S ribosomal protein L8"/>
    <property type="match status" value="1"/>
</dbReference>
<dbReference type="Gene3D" id="2.30.30.30">
    <property type="match status" value="1"/>
</dbReference>
<dbReference type="Gene3D" id="2.40.50.140">
    <property type="entry name" value="Nucleic acid-binding proteins"/>
    <property type="match status" value="1"/>
</dbReference>
<dbReference type="Gene3D" id="4.10.950.10">
    <property type="entry name" value="Ribosomal protein L2, domain 3"/>
    <property type="match status" value="1"/>
</dbReference>
<dbReference type="InterPro" id="IPR012340">
    <property type="entry name" value="NA-bd_OB-fold"/>
</dbReference>
<dbReference type="InterPro" id="IPR014722">
    <property type="entry name" value="Rib_uL2_dom2"/>
</dbReference>
<dbReference type="InterPro" id="IPR002171">
    <property type="entry name" value="Ribosomal_uL2"/>
</dbReference>
<dbReference type="InterPro" id="IPR023672">
    <property type="entry name" value="Ribosomal_uL2_arc_euk"/>
</dbReference>
<dbReference type="InterPro" id="IPR022669">
    <property type="entry name" value="Ribosomal_uL2_C"/>
</dbReference>
<dbReference type="InterPro" id="IPR022671">
    <property type="entry name" value="Ribosomal_uL2_CS"/>
</dbReference>
<dbReference type="InterPro" id="IPR014726">
    <property type="entry name" value="Ribosomal_uL2_dom3"/>
</dbReference>
<dbReference type="InterPro" id="IPR022666">
    <property type="entry name" value="Ribosomal_uL2_RNA-bd_dom"/>
</dbReference>
<dbReference type="InterPro" id="IPR008991">
    <property type="entry name" value="Translation_prot_SH3-like_sf"/>
</dbReference>
<dbReference type="NCBIfam" id="NF007180">
    <property type="entry name" value="PRK09612.1"/>
    <property type="match status" value="1"/>
</dbReference>
<dbReference type="PANTHER" id="PTHR13691:SF16">
    <property type="entry name" value="LARGE RIBOSOMAL SUBUNIT PROTEIN UL2"/>
    <property type="match status" value="1"/>
</dbReference>
<dbReference type="PANTHER" id="PTHR13691">
    <property type="entry name" value="RIBOSOMAL PROTEIN L2"/>
    <property type="match status" value="1"/>
</dbReference>
<dbReference type="Pfam" id="PF00181">
    <property type="entry name" value="Ribosomal_L2"/>
    <property type="match status" value="1"/>
</dbReference>
<dbReference type="Pfam" id="PF03947">
    <property type="entry name" value="Ribosomal_L2_C"/>
    <property type="match status" value="1"/>
</dbReference>
<dbReference type="PIRSF" id="PIRSF002158">
    <property type="entry name" value="Ribosomal_L2"/>
    <property type="match status" value="1"/>
</dbReference>
<dbReference type="SMART" id="SM01383">
    <property type="entry name" value="Ribosomal_L2"/>
    <property type="match status" value="1"/>
</dbReference>
<dbReference type="SMART" id="SM01382">
    <property type="entry name" value="Ribosomal_L2_C"/>
    <property type="match status" value="1"/>
</dbReference>
<dbReference type="SUPFAM" id="SSF50249">
    <property type="entry name" value="Nucleic acid-binding proteins"/>
    <property type="match status" value="1"/>
</dbReference>
<dbReference type="SUPFAM" id="SSF50104">
    <property type="entry name" value="Translation proteins SH3-like domain"/>
    <property type="match status" value="1"/>
</dbReference>
<dbReference type="PROSITE" id="PS00467">
    <property type="entry name" value="RIBOSOMAL_L2"/>
    <property type="match status" value="1"/>
</dbReference>
<name>RL8_DICDI</name>
<feature type="chain" id="PRO_0000129731" description="Large ribosomal subunit protein uL2">
    <location>
        <begin position="1"/>
        <end position="255"/>
    </location>
</feature>
<feature type="region of interest" description="Disordered" evidence="1">
    <location>
        <begin position="211"/>
        <end position="235"/>
    </location>
</feature>
<feature type="sequence conflict" description="In Ref. 1; CAA33741." evidence="2" ref="1">
    <original>GN</original>
    <variation>RH</variation>
    <location>
        <begin position="100"/>
        <end position="101"/>
    </location>
</feature>
<evidence type="ECO:0000256" key="1">
    <source>
        <dbReference type="SAM" id="MobiDB-lite"/>
    </source>
</evidence>
<evidence type="ECO:0000305" key="2"/>
<organism>
    <name type="scientific">Dictyostelium discoideum</name>
    <name type="common">Social amoeba</name>
    <dbReference type="NCBI Taxonomy" id="44689"/>
    <lineage>
        <taxon>Eukaryota</taxon>
        <taxon>Amoebozoa</taxon>
        <taxon>Evosea</taxon>
        <taxon>Eumycetozoa</taxon>
        <taxon>Dictyostelia</taxon>
        <taxon>Dictyosteliales</taxon>
        <taxon>Dictyosteliaceae</taxon>
        <taxon>Dictyostelium</taxon>
    </lineage>
</organism>
<keyword id="KW-0903">Direct protein sequencing</keyword>
<keyword id="KW-1185">Reference proteome</keyword>
<keyword id="KW-0687">Ribonucleoprotein</keyword>
<keyword id="KW-0689">Ribosomal protein</keyword>
<accession>P13023</accession>
<accession>Q554Y1</accession>
<accession>Q86HT2</accession>
<sequence>MGRIIRAQRKGKAGSVFGAHTHHRKGTPRFRALDYAERQGYVKGVVKEIIHDPGRGAPLARVVFKGLTQFKLDKQLFIAPEGMHTGQFVFAGKKATLTIGNILPIGKLPEGTIICNVEEKLGDCGAVARCSGNYATIVSHNPDEGVTRIKLPSGSKKNVSSLARAMIGIVAGGGRIDKPMLKAGRAFHKYRVKKNNWPKVRGVAMNPVEHPHGGGNHQHVGHATTTKRDDPAGKKVGLIAARRTGRLRGTKNISE</sequence>